<sequence>MLLQGALLLLLALPSHGEDNMEDPPLPKGACAGWMAGIPGHPGHNGTPGRDGRDGTPGEKGEKGDPGLVGPKGDTGETGITGIEGPRGFPGTPGRKGEPGESAYVYRSAFSVGLERQVTVPNVPIRFTKIFYNQQNHYDGTTGKFLCNIPGLYYFSYHITVYLKDVKVSLYKNDKALLFTHDQFQDKNVDQASGSVLLYLEKGDQVWLQVYEGENHNGVYADNVNDSTFTGFLLYHNIVE</sequence>
<comment type="function">
    <text evidence="1">Important adipokine involved in the control of fat metabolism and insulin sensitivity, with direct anti-diabetic, anti-atherogenic and anti-inflammatory activities. Stimulates AMPK phosphorylation and activation in the liver and the skeletal muscle, enhancing glucose utilization and fatty-acid combustion. Antagonizes TNF-alpha by negatively regulating its expression in various tissues such as liver and macrophages, and also by counteracting its effects. Inhibits endothelial NF-kappa-B signaling through a cAMP-dependent pathway. May play a role in cell growth, angiogenesis and tissue remodeling by binding and sequestering various growth factors with distinct binding affinities, depending on the type of complex, LMW, MMW or HMW (By similarity).</text>
</comment>
<comment type="activity regulation">
    <text evidence="2">Polymerization and secretion of adiponectin is inhibited by succination of cysteine residues by the Krebs cycle intermediate fumarate, which leads to S-(2-succinyl)cysteine residues.</text>
</comment>
<comment type="subunit">
    <text evidence="2">Homomultimer. Forms trimers, hexamers and 12- to 18-mers. The trimers (low molecular weight complexes / LMW) are assembled via non-covalent interactions of the collagen-like domains in a triple helix and hydrophobic interactions within the globular C1q domain. Several trimers can associate to form disulfide-linked hexamers (middle molecular weight complexes / MMW) and larger complexes (higher molecular weight / HMW). The HMW-complex assembly is also modulated by the degree of lysine hydroxylation and glycosylation. LMW, MMW and HMW complexes bind to HBEGF, MMW and HMW complexes bind to PDGFB, and HMW complex binds to FGF2. Interacts with CTRP9 via the C1q domain (heterotrimeric complex).</text>
</comment>
<comment type="interaction">
    <interactant intactId="EBI-7264459">
        <id>Q3Y5Z3</id>
    </interactant>
    <interactant intactId="EBI-7264459">
        <id>Q3Y5Z3</id>
        <label>ADIPOQ</label>
    </interactant>
    <organismsDiffer>false</organismsDiffer>
    <experiments>2</experiments>
</comment>
<comment type="subcellular location">
    <subcellularLocation>
        <location evidence="8">Secreted</location>
    </subcellularLocation>
</comment>
<comment type="PTM">
    <text evidence="2">HMW complexes are more extensively glycosylated than smaller oligomers. Hydroxylation and glycosylation of the lysine residues within the collagen-like domain of adiponectin seem to be critically involved in regulating the formation and/or secretion of HMW complexes and consequently contribute to the insulin-sensitizing activity of adiponectin in hepatocytes.</text>
</comment>
<comment type="PTM">
    <text evidence="1 5 6">O-glycosylated. O-linked glycans on hydroxylysine residues consist of Glc-Gal disaccharides bound to the oxygen atom of post-translationally added hydroxyl groups (By similarity). O-linked glycosylations elsewhere disialylated with the structure Neu5Acalpha2-&gt;8Neu5Acalpha2-&gt;3Gal. Sialylated by alpha 2,8-sialyltransferase III. Desialylated forms are rapidly cleared from the circulation. Not N-glycosylated.</text>
</comment>
<comment type="PTM">
    <text evidence="2">Succination of Cys-31 by the Krebs cycle intermediate fumarate, which leads to S-(2-succinyl)cysteine residues, inhibits polymerization and secretion of adiponectin. Adiponectin is a major target for succination in both adipocytes and adipose tissue of diabetic mammals. It was proposed that succination of proteins is a biomarker of mitochondrial stress and accumulation of Krebs cycle intermediates in adipose tissue in diabetes and that succination of adiponectin may contribute to the decrease in plasma adiponectin in diabetes.</text>
</comment>
<comment type="miscellaneous">
    <text evidence="1">HMW-complex blood contents are higher in females than in males, are increased in males by castration and decreased again upon subsequent testosterone treatment, which blocks HMW-complex secretion.</text>
</comment>
<gene>
    <name type="primary">ADIPOQ</name>
    <name type="synonym">ACRP30</name>
    <name type="synonym">APM1</name>
</gene>
<proteinExistence type="evidence at protein level"/>
<keyword id="KW-0176">Collagen</keyword>
<keyword id="KW-0903">Direct protein sequencing</keyword>
<keyword id="KW-1015">Disulfide bond</keyword>
<keyword id="KW-0325">Glycoprotein</keyword>
<keyword id="KW-0372">Hormone</keyword>
<keyword id="KW-0379">Hydroxylation</keyword>
<keyword id="KW-1185">Reference proteome</keyword>
<keyword id="KW-0677">Repeat</keyword>
<keyword id="KW-0964">Secreted</keyword>
<keyword id="KW-0732">Signal</keyword>
<feature type="signal peptide" evidence="5 6">
    <location>
        <begin position="1"/>
        <end position="17"/>
    </location>
</feature>
<feature type="chain" id="PRO_0000236269" description="Adiponectin">
    <location>
        <begin position="18"/>
        <end position="240"/>
    </location>
</feature>
<feature type="domain" description="Collagen-like">
    <location>
        <begin position="43"/>
        <end position="102"/>
    </location>
</feature>
<feature type="domain" description="C1q" evidence="3">
    <location>
        <begin position="103"/>
        <end position="240"/>
    </location>
</feature>
<feature type="region of interest" description="Disordered" evidence="4">
    <location>
        <begin position="29"/>
        <end position="100"/>
    </location>
</feature>
<feature type="compositionally biased region" description="Basic and acidic residues" evidence="4">
    <location>
        <begin position="50"/>
        <end position="65"/>
    </location>
</feature>
<feature type="site" description="Not hydroxylated" evidence="6">
    <location>
        <position position="57"/>
    </location>
</feature>
<feature type="site" description="Not hydroxylated" evidence="6">
    <location>
        <position position="66"/>
    </location>
</feature>
<feature type="site" description="Not hydroxylated" evidence="6">
    <location>
        <position position="71"/>
    </location>
</feature>
<feature type="site" description="Not hydroxylated" evidence="6">
    <location>
        <position position="90"/>
    </location>
</feature>
<feature type="site" description="Not hydroxylated" evidence="6">
    <location>
        <position position="99"/>
    </location>
</feature>
<feature type="site" description="Not glycosylated" evidence="6">
    <location>
        <position position="225"/>
    </location>
</feature>
<feature type="modified residue" description="5-hydroxylysine" evidence="6">
    <location>
        <position position="28"/>
    </location>
</feature>
<feature type="modified residue" description="S-(2-succinyl)cysteine" evidence="2">
    <location>
        <position position="31"/>
    </location>
</feature>
<feature type="modified residue" description="4-hydroxyproline" evidence="6">
    <location>
        <position position="39"/>
    </location>
</feature>
<feature type="modified residue" description="4-hydroxyproline" evidence="6">
    <location>
        <position position="42"/>
    </location>
</feature>
<feature type="modified residue" description="4-hydroxyproline" evidence="6">
    <location>
        <position position="48"/>
    </location>
</feature>
<feature type="modified residue" description="5-hydroxylysine" evidence="6">
    <location>
        <position position="60"/>
    </location>
</feature>
<feature type="modified residue" description="5-hydroxylysine" evidence="6">
    <location>
        <position position="63"/>
    </location>
</feature>
<feature type="modified residue" description="5-hydroxylysine" evidence="6">
    <location>
        <position position="72"/>
    </location>
</feature>
<feature type="modified residue" description="4-hydroxyproline" evidence="6">
    <location>
        <position position="86"/>
    </location>
</feature>
<feature type="modified residue" description="5-hydroxylysine" evidence="6">
    <location>
        <position position="96"/>
    </location>
</feature>
<feature type="glycosylation site" description="O-linked (Gal...) hydroxylysine" evidence="6">
    <location>
        <position position="28"/>
    </location>
</feature>
<feature type="glycosylation site" description="O-linked (Gal...) hydroxylysine" evidence="6">
    <location>
        <position position="60"/>
    </location>
</feature>
<feature type="glycosylation site" description="O-linked (Gal...) hydroxylysine" evidence="6">
    <location>
        <position position="63"/>
    </location>
</feature>
<feature type="glycosylation site" description="O-linked (Gal...) hydroxylysine" evidence="5">
    <location>
        <position position="72"/>
    </location>
</feature>
<feature type="glycosylation site" description="O-linked (Gal...) hydroxylysine" evidence="6">
    <location>
        <position position="96"/>
    </location>
</feature>
<feature type="disulfide bond" description="Interchain; in form MMW and form HMW" evidence="1">
    <location>
        <position position="31"/>
    </location>
</feature>
<feature type="sequence conflict" description="In Ref. 1; AAK58902." evidence="7" ref="1">
    <original>P</original>
    <variation>A</variation>
    <location>
        <position position="66"/>
    </location>
</feature>
<feature type="sequence conflict" description="In Ref. 1; AAK58902." evidence="7" ref="1">
    <original>V</original>
    <variation>L</variation>
    <location>
        <position position="69"/>
    </location>
</feature>
<feature type="sequence conflict" description="In Ref. 1; AAK58902." evidence="7" ref="1">
    <original>D</original>
    <variation>E</variation>
    <location>
        <position position="74"/>
    </location>
</feature>
<feature type="sequence conflict" description="In Ref. 1; AAK58902." evidence="7" ref="1">
    <original>ETGITGI</original>
    <variation>DVGMTGA</variation>
    <location>
        <begin position="77"/>
        <end position="83"/>
    </location>
</feature>
<feature type="sequence conflict" description="In Ref. 1; AAK58902." evidence="7" ref="1">
    <original>S</original>
    <variation>A</variation>
    <location>
        <position position="102"/>
    </location>
</feature>
<feature type="sequence conflict" description="In Ref. 1; AAK58902." evidence="7" ref="1">
    <original>RQ</original>
    <variation>TR</variation>
    <location>
        <begin position="116"/>
        <end position="117"/>
    </location>
</feature>
<feature type="sequence conflict" description="In Ref. 1; AAK58902." evidence="7" ref="1">
    <original>T</original>
    <variation>S</variation>
    <location>
        <position position="141"/>
    </location>
</feature>
<feature type="sequence conflict" description="In Ref. 1; AAK58902." evidence="7" ref="1">
    <original>L</original>
    <variation>Y</variation>
    <location>
        <position position="146"/>
    </location>
</feature>
<feature type="sequence conflict" description="In Ref. 1; AAK58902." evidence="7" ref="1">
    <original>L</original>
    <variation>M</variation>
    <location>
        <position position="163"/>
    </location>
</feature>
<feature type="sequence conflict" description="In Ref. 1; AAK58902." evidence="7" ref="1">
    <original>YKN</original>
    <variation>FKK</variation>
    <location>
        <begin position="171"/>
        <end position="173"/>
    </location>
</feature>
<feature type="sequence conflict" description="In Ref. 1; AAK58902." evidence="7" ref="1">
    <original>L</original>
    <variation>V</variation>
    <location>
        <position position="177"/>
    </location>
</feature>
<feature type="sequence conflict" description="In Ref. 1; AAK58902." evidence="7" ref="1">
    <original>H</original>
    <variation>Y</variation>
    <location>
        <position position="181"/>
    </location>
</feature>
<feature type="sequence conflict" description="In Ref. 1; AAK58902." evidence="7" ref="1">
    <original>FQD</original>
    <variation>YQE</variation>
    <location>
        <begin position="184"/>
        <end position="186"/>
    </location>
</feature>
<feature type="sequence conflict" description="In Ref. 1; AAK58902." evidence="7" ref="1">
    <original>Y</original>
    <variation>H</variation>
    <location>
        <position position="199"/>
    </location>
</feature>
<feature type="sequence conflict" description="In Ref. 1; AAK58902." evidence="7" ref="1">
    <original>K</original>
    <variation>V</variation>
    <location>
        <position position="202"/>
    </location>
</feature>
<dbReference type="EMBL" id="AF269230">
    <property type="protein sequence ID" value="AAK58902.1"/>
    <property type="molecule type" value="mRNA"/>
</dbReference>
<dbReference type="EMBL" id="DQ156120">
    <property type="protein sequence ID" value="AAZ81421.1"/>
    <property type="molecule type" value="Genomic_DNA"/>
</dbReference>
<dbReference type="EMBL" id="BC140488">
    <property type="protein sequence ID" value="AAI40489.1"/>
    <property type="molecule type" value="mRNA"/>
</dbReference>
<dbReference type="RefSeq" id="NP_777167.1">
    <property type="nucleotide sequence ID" value="NM_174742.2"/>
</dbReference>
<dbReference type="RefSeq" id="XP_024851000.1">
    <property type="nucleotide sequence ID" value="XM_024995232.2"/>
</dbReference>
<dbReference type="SMR" id="Q3Y5Z3"/>
<dbReference type="FunCoup" id="Q3Y5Z3">
    <property type="interactions" value="128"/>
</dbReference>
<dbReference type="MINT" id="Q3Y5Z3"/>
<dbReference type="STRING" id="9913.ENSBTAP00000065019"/>
<dbReference type="GlyCosmos" id="Q3Y5Z3">
    <property type="glycosylation" value="5 sites, No reported glycans"/>
</dbReference>
<dbReference type="GlyGen" id="Q3Y5Z3">
    <property type="glycosylation" value="5 sites"/>
</dbReference>
<dbReference type="PaxDb" id="9913-ENSBTAP00000026395"/>
<dbReference type="PeptideAtlas" id="Q3Y5Z3"/>
<dbReference type="Ensembl" id="ENSBTAT00000135305.1">
    <property type="protein sequence ID" value="ENSBTAP00000087044.1"/>
    <property type="gene ID" value="ENSBTAG00000059085.1"/>
</dbReference>
<dbReference type="GeneID" id="282865"/>
<dbReference type="CTD" id="9370"/>
<dbReference type="eggNOG" id="ENOG502QRY3">
    <property type="taxonomic scope" value="Eukaryota"/>
</dbReference>
<dbReference type="GeneTree" id="ENSGT00940000159828"/>
<dbReference type="HOGENOM" id="CLU_001074_0_2_1"/>
<dbReference type="InParanoid" id="Q3Y5Z3"/>
<dbReference type="OrthoDB" id="8044756at2759"/>
<dbReference type="TreeFam" id="TF329591"/>
<dbReference type="Proteomes" id="UP000009136">
    <property type="component" value="Chromosome 1"/>
</dbReference>
<dbReference type="GO" id="GO:0071944">
    <property type="term" value="C:cell periphery"/>
    <property type="evidence" value="ECO:0000250"/>
    <property type="project" value="UniProtKB"/>
</dbReference>
<dbReference type="GO" id="GO:0009986">
    <property type="term" value="C:cell surface"/>
    <property type="evidence" value="ECO:0000250"/>
    <property type="project" value="UniProtKB"/>
</dbReference>
<dbReference type="GO" id="GO:0005581">
    <property type="term" value="C:collagen trimer"/>
    <property type="evidence" value="ECO:0007669"/>
    <property type="project" value="UniProtKB-KW"/>
</dbReference>
<dbReference type="GO" id="GO:0005783">
    <property type="term" value="C:endoplasmic reticulum"/>
    <property type="evidence" value="ECO:0000250"/>
    <property type="project" value="UniProtKB"/>
</dbReference>
<dbReference type="GO" id="GO:0005615">
    <property type="term" value="C:extracellular space"/>
    <property type="evidence" value="ECO:0000314"/>
    <property type="project" value="AgBase"/>
</dbReference>
<dbReference type="GO" id="GO:0048471">
    <property type="term" value="C:perinuclear region of cytoplasm"/>
    <property type="evidence" value="ECO:0000250"/>
    <property type="project" value="UniProtKB"/>
</dbReference>
<dbReference type="GO" id="GO:0005179">
    <property type="term" value="F:hormone activity"/>
    <property type="evidence" value="ECO:0000250"/>
    <property type="project" value="UniProtKB"/>
</dbReference>
<dbReference type="GO" id="GO:0042802">
    <property type="term" value="F:identical protein binding"/>
    <property type="evidence" value="ECO:0000353"/>
    <property type="project" value="IntAct"/>
</dbReference>
<dbReference type="GO" id="GO:0033691">
    <property type="term" value="F:sialic acid binding"/>
    <property type="evidence" value="ECO:0000314"/>
    <property type="project" value="UniProtKB"/>
</dbReference>
<dbReference type="GO" id="GO:0005102">
    <property type="term" value="F:signaling receptor binding"/>
    <property type="evidence" value="ECO:0000250"/>
    <property type="project" value="UniProtKB"/>
</dbReference>
<dbReference type="GO" id="GO:0050873">
    <property type="term" value="P:brown fat cell differentiation"/>
    <property type="evidence" value="ECO:0000250"/>
    <property type="project" value="UniProtKB"/>
</dbReference>
<dbReference type="GO" id="GO:0032869">
    <property type="term" value="P:cellular response to insulin stimulus"/>
    <property type="evidence" value="ECO:0000250"/>
    <property type="project" value="UniProtKB"/>
</dbReference>
<dbReference type="GO" id="GO:0071466">
    <property type="term" value="P:cellular response to xenobiotic stimulus"/>
    <property type="evidence" value="ECO:0000250"/>
    <property type="project" value="UniProtKB"/>
</dbReference>
<dbReference type="GO" id="GO:0070994">
    <property type="term" value="P:detection of oxidative stress"/>
    <property type="evidence" value="ECO:0000250"/>
    <property type="project" value="UniProtKB"/>
</dbReference>
<dbReference type="GO" id="GO:0006635">
    <property type="term" value="P:fatty acid beta-oxidation"/>
    <property type="evidence" value="ECO:0000250"/>
    <property type="project" value="UniProtKB"/>
</dbReference>
<dbReference type="GO" id="GO:0019395">
    <property type="term" value="P:fatty acid oxidation"/>
    <property type="evidence" value="ECO:0000250"/>
    <property type="project" value="UniProtKB"/>
</dbReference>
<dbReference type="GO" id="GO:0042593">
    <property type="term" value="P:glucose homeostasis"/>
    <property type="evidence" value="ECO:0000250"/>
    <property type="project" value="UniProtKB"/>
</dbReference>
<dbReference type="GO" id="GO:0006006">
    <property type="term" value="P:glucose metabolic process"/>
    <property type="evidence" value="ECO:0000250"/>
    <property type="project" value="UniProtKB"/>
</dbReference>
<dbReference type="GO" id="GO:0034383">
    <property type="term" value="P:low-density lipoprotein particle clearance"/>
    <property type="evidence" value="ECO:0000250"/>
    <property type="project" value="UniProtKB"/>
</dbReference>
<dbReference type="GO" id="GO:0045776">
    <property type="term" value="P:negative regulation of blood pressure"/>
    <property type="evidence" value="ECO:0000250"/>
    <property type="project" value="UniProtKB"/>
</dbReference>
<dbReference type="GO" id="GO:0043124">
    <property type="term" value="P:negative regulation of canonical NF-kappaB signal transduction"/>
    <property type="evidence" value="ECO:0000250"/>
    <property type="project" value="UniProtKB"/>
</dbReference>
<dbReference type="GO" id="GO:0030336">
    <property type="term" value="P:negative regulation of cell migration"/>
    <property type="evidence" value="ECO:0000250"/>
    <property type="project" value="UniProtKB"/>
</dbReference>
<dbReference type="GO" id="GO:2000279">
    <property type="term" value="P:negative regulation of DNA biosynthetic process"/>
    <property type="evidence" value="ECO:0000250"/>
    <property type="project" value="UniProtKB"/>
</dbReference>
<dbReference type="GO" id="GO:0045892">
    <property type="term" value="P:negative regulation of DNA-templated transcription"/>
    <property type="evidence" value="ECO:0000250"/>
    <property type="project" value="UniProtKB"/>
</dbReference>
<dbReference type="GO" id="GO:0070373">
    <property type="term" value="P:negative regulation of ERK1 and ERK2 cascade"/>
    <property type="evidence" value="ECO:0000250"/>
    <property type="project" value="UniProtKB"/>
</dbReference>
<dbReference type="GO" id="GO:0045599">
    <property type="term" value="P:negative regulation of fat cell differentiation"/>
    <property type="evidence" value="ECO:0000250"/>
    <property type="project" value="UniProtKB"/>
</dbReference>
<dbReference type="GO" id="GO:0045721">
    <property type="term" value="P:negative regulation of gluconeogenesis"/>
    <property type="evidence" value="ECO:0000250"/>
    <property type="project" value="UniProtKB"/>
</dbReference>
<dbReference type="GO" id="GO:0030853">
    <property type="term" value="P:negative regulation of granulocyte differentiation"/>
    <property type="evidence" value="ECO:0000250"/>
    <property type="project" value="UniProtKB"/>
</dbReference>
<dbReference type="GO" id="GO:0034115">
    <property type="term" value="P:negative regulation of heterotypic cell-cell adhesion"/>
    <property type="evidence" value="ECO:0000250"/>
    <property type="project" value="UniProtKB"/>
</dbReference>
<dbReference type="GO" id="GO:0050728">
    <property type="term" value="P:negative regulation of inflammatory response"/>
    <property type="evidence" value="ECO:0000250"/>
    <property type="project" value="UniProtKB"/>
</dbReference>
<dbReference type="GO" id="GO:0090317">
    <property type="term" value="P:negative regulation of intracellular protein transport"/>
    <property type="evidence" value="ECO:0000250"/>
    <property type="project" value="UniProtKB"/>
</dbReference>
<dbReference type="GO" id="GO:0010745">
    <property type="term" value="P:negative regulation of macrophage derived foam cell differentiation"/>
    <property type="evidence" value="ECO:0000250"/>
    <property type="project" value="UniProtKB"/>
</dbReference>
<dbReference type="GO" id="GO:0045650">
    <property type="term" value="P:negative regulation of macrophage differentiation"/>
    <property type="evidence" value="ECO:0000250"/>
    <property type="project" value="UniProtKB"/>
</dbReference>
<dbReference type="GO" id="GO:0043407">
    <property type="term" value="P:negative regulation of MAP kinase activity"/>
    <property type="evidence" value="ECO:0000250"/>
    <property type="project" value="UniProtKB"/>
</dbReference>
<dbReference type="GO" id="GO:2000590">
    <property type="term" value="P:negative regulation of metanephric mesenchymal cell migration"/>
    <property type="evidence" value="ECO:0000250"/>
    <property type="project" value="UniProtKB"/>
</dbReference>
<dbReference type="GO" id="GO:0050765">
    <property type="term" value="P:negative regulation of phagocytosis"/>
    <property type="evidence" value="ECO:0000250"/>
    <property type="project" value="UniProtKB"/>
</dbReference>
<dbReference type="GO" id="GO:0010642">
    <property type="term" value="P:negative regulation of platelet-derived growth factor receptor signaling pathway"/>
    <property type="evidence" value="ECO:0000250"/>
    <property type="project" value="UniProtKB"/>
</dbReference>
<dbReference type="GO" id="GO:2000584">
    <property type="term" value="P:negative regulation of platelet-derived growth factor receptor-alpha signaling pathway"/>
    <property type="evidence" value="ECO:0000250"/>
    <property type="project" value="UniProtKB"/>
</dbReference>
<dbReference type="GO" id="GO:0031953">
    <property type="term" value="P:negative regulation of protein autophosphorylation"/>
    <property type="evidence" value="ECO:0000250"/>
    <property type="project" value="UniProtKB"/>
</dbReference>
<dbReference type="GO" id="GO:1900121">
    <property type="term" value="P:negative regulation of receptor binding"/>
    <property type="evidence" value="ECO:0000250"/>
    <property type="project" value="UniProtKB"/>
</dbReference>
<dbReference type="GO" id="GO:0050805">
    <property type="term" value="P:negative regulation of synaptic transmission"/>
    <property type="evidence" value="ECO:0000250"/>
    <property type="project" value="UniProtKB"/>
</dbReference>
<dbReference type="GO" id="GO:0032720">
    <property type="term" value="P:negative regulation of tumor necrosis factor production"/>
    <property type="evidence" value="ECO:0000250"/>
    <property type="project" value="UniProtKB"/>
</dbReference>
<dbReference type="GO" id="GO:0010804">
    <property type="term" value="P:negative regulation of tumor necrosis factor-mediated signaling pathway"/>
    <property type="evidence" value="ECO:0000250"/>
    <property type="project" value="UniProtKB"/>
</dbReference>
<dbReference type="GO" id="GO:1904753">
    <property type="term" value="P:negative regulation of vascular associated smooth muscle cell migration"/>
    <property type="evidence" value="ECO:0000250"/>
    <property type="project" value="UniProtKB"/>
</dbReference>
<dbReference type="GO" id="GO:1904706">
    <property type="term" value="P:negative regulation of vascular associated smooth muscle cell proliferation"/>
    <property type="evidence" value="ECO:0000250"/>
    <property type="project" value="UniProtKB"/>
</dbReference>
<dbReference type="GO" id="GO:2000481">
    <property type="term" value="P:positive regulation of cAMP-dependent protein kinase activity"/>
    <property type="evidence" value="ECO:0000250"/>
    <property type="project" value="UniProtKB"/>
</dbReference>
<dbReference type="GO" id="GO:0141163">
    <property type="term" value="P:positive regulation of cAMP/PKA signal transduction"/>
    <property type="evidence" value="ECO:0000250"/>
    <property type="project" value="UniProtKB"/>
</dbReference>
<dbReference type="GO" id="GO:0043123">
    <property type="term" value="P:positive regulation of canonical NF-kappaB signal transduction"/>
    <property type="evidence" value="ECO:0000250"/>
    <property type="project" value="UniProtKB"/>
</dbReference>
<dbReference type="GO" id="GO:0010875">
    <property type="term" value="P:positive regulation of cholesterol efflux"/>
    <property type="evidence" value="ECO:0000250"/>
    <property type="project" value="UniProtKB"/>
</dbReference>
<dbReference type="GO" id="GO:0046326">
    <property type="term" value="P:positive regulation of D-glucose import"/>
    <property type="evidence" value="ECO:0000250"/>
    <property type="project" value="UniProtKB"/>
</dbReference>
<dbReference type="GO" id="GO:0045923">
    <property type="term" value="P:positive regulation of fatty acid metabolic process"/>
    <property type="evidence" value="ECO:0000250"/>
    <property type="project" value="UniProtKB"/>
</dbReference>
<dbReference type="GO" id="GO:2000467">
    <property type="term" value="P:positive regulation of glycogen (starch) synthase activity"/>
    <property type="evidence" value="ECO:0000250"/>
    <property type="project" value="UniProtKB"/>
</dbReference>
<dbReference type="GO" id="GO:0032757">
    <property type="term" value="P:positive regulation of interleukin-8 production"/>
    <property type="evidence" value="ECO:0000250"/>
    <property type="project" value="UniProtKB"/>
</dbReference>
<dbReference type="GO" id="GO:2000478">
    <property type="term" value="P:positive regulation of metanephric podocyte development"/>
    <property type="evidence" value="ECO:0000250"/>
    <property type="project" value="UniProtKB"/>
</dbReference>
<dbReference type="GO" id="GO:0071639">
    <property type="term" value="P:positive regulation of monocyte chemotactic protein-1 production"/>
    <property type="evidence" value="ECO:0000250"/>
    <property type="project" value="UniProtKB"/>
</dbReference>
<dbReference type="GO" id="GO:0033034">
    <property type="term" value="P:positive regulation of myeloid cell apoptotic process"/>
    <property type="evidence" value="ECO:0000250"/>
    <property type="project" value="UniProtKB"/>
</dbReference>
<dbReference type="GO" id="GO:0001934">
    <property type="term" value="P:positive regulation of protein phosphorylation"/>
    <property type="evidence" value="ECO:0000250"/>
    <property type="project" value="UniProtKB"/>
</dbReference>
<dbReference type="GO" id="GO:2000534">
    <property type="term" value="P:positive regulation of renal albumin absorption"/>
    <property type="evidence" value="ECO:0000250"/>
    <property type="project" value="UniProtKB"/>
</dbReference>
<dbReference type="GO" id="GO:0009967">
    <property type="term" value="P:positive regulation of signal transduction"/>
    <property type="evidence" value="ECO:0000250"/>
    <property type="project" value="UniProtKB"/>
</dbReference>
<dbReference type="GO" id="GO:0072659">
    <property type="term" value="P:protein localization to plasma membrane"/>
    <property type="evidence" value="ECO:0000250"/>
    <property type="project" value="UniProtKB"/>
</dbReference>
<dbReference type="GO" id="GO:0010906">
    <property type="term" value="P:regulation of glucose metabolic process"/>
    <property type="evidence" value="ECO:0000250"/>
    <property type="project" value="UniProtKB"/>
</dbReference>
<dbReference type="GO" id="GO:0009749">
    <property type="term" value="P:response to glucose"/>
    <property type="evidence" value="ECO:0000250"/>
    <property type="project" value="UniProtKB"/>
</dbReference>
<dbReference type="GO" id="GO:0034612">
    <property type="term" value="P:response to tumor necrosis factor"/>
    <property type="evidence" value="ECO:0000250"/>
    <property type="project" value="UniProtKB"/>
</dbReference>
<dbReference type="FunFam" id="2.60.120.40:FF:000001">
    <property type="entry name" value="Complement C1q B chain"/>
    <property type="match status" value="1"/>
</dbReference>
<dbReference type="Gene3D" id="2.60.120.40">
    <property type="match status" value="1"/>
</dbReference>
<dbReference type="InterPro" id="IPR001073">
    <property type="entry name" value="C1q_dom"/>
</dbReference>
<dbReference type="InterPro" id="IPR008160">
    <property type="entry name" value="Collagen"/>
</dbReference>
<dbReference type="InterPro" id="IPR050392">
    <property type="entry name" value="Collagen/C1q_domain"/>
</dbReference>
<dbReference type="InterPro" id="IPR008983">
    <property type="entry name" value="Tumour_necrosis_fac-like_dom"/>
</dbReference>
<dbReference type="PANTHER" id="PTHR15427:SF20">
    <property type="entry name" value="ADIPONECTIN"/>
    <property type="match status" value="1"/>
</dbReference>
<dbReference type="PANTHER" id="PTHR15427">
    <property type="entry name" value="EMILIN ELASTIN MICROFIBRIL INTERFACE-LOCATED PROTEIN ELASTIN MICROFIBRIL INTERFACER"/>
    <property type="match status" value="1"/>
</dbReference>
<dbReference type="Pfam" id="PF00386">
    <property type="entry name" value="C1q"/>
    <property type="match status" value="1"/>
</dbReference>
<dbReference type="Pfam" id="PF01391">
    <property type="entry name" value="Collagen"/>
    <property type="match status" value="1"/>
</dbReference>
<dbReference type="PRINTS" id="PR00007">
    <property type="entry name" value="COMPLEMNTC1Q"/>
</dbReference>
<dbReference type="SMART" id="SM00110">
    <property type="entry name" value="C1Q"/>
    <property type="match status" value="1"/>
</dbReference>
<dbReference type="SUPFAM" id="SSF49842">
    <property type="entry name" value="TNF-like"/>
    <property type="match status" value="1"/>
</dbReference>
<dbReference type="PROSITE" id="PS50871">
    <property type="entry name" value="C1Q"/>
    <property type="match status" value="1"/>
</dbReference>
<organism>
    <name type="scientific">Bos taurus</name>
    <name type="common">Bovine</name>
    <dbReference type="NCBI Taxonomy" id="9913"/>
    <lineage>
        <taxon>Eukaryota</taxon>
        <taxon>Metazoa</taxon>
        <taxon>Chordata</taxon>
        <taxon>Craniata</taxon>
        <taxon>Vertebrata</taxon>
        <taxon>Euteleostomi</taxon>
        <taxon>Mammalia</taxon>
        <taxon>Eutheria</taxon>
        <taxon>Laurasiatheria</taxon>
        <taxon>Artiodactyla</taxon>
        <taxon>Ruminantia</taxon>
        <taxon>Pecora</taxon>
        <taxon>Bovidae</taxon>
        <taxon>Bovinae</taxon>
        <taxon>Bos</taxon>
    </lineage>
</organism>
<evidence type="ECO:0000250" key="1"/>
<evidence type="ECO:0000250" key="2">
    <source>
        <dbReference type="UniProtKB" id="Q60994"/>
    </source>
</evidence>
<evidence type="ECO:0000255" key="3">
    <source>
        <dbReference type="PROSITE-ProRule" id="PRU00368"/>
    </source>
</evidence>
<evidence type="ECO:0000256" key="4">
    <source>
        <dbReference type="SAM" id="MobiDB-lite"/>
    </source>
</evidence>
<evidence type="ECO:0000269" key="5">
    <source>
    </source>
</evidence>
<evidence type="ECO:0000269" key="6">
    <source>
    </source>
</evidence>
<evidence type="ECO:0000305" key="7"/>
<evidence type="ECO:0000305" key="8">
    <source>
    </source>
</evidence>
<reference key="1">
    <citation type="journal article" date="2001" name="J. Biol. Chem.">
        <title>Identification and adipocyte differentiation-dependent expression of the unique disialic acid residue in an adipose tissue-specific glycoprotein, adipo Q.</title>
        <authorList>
            <person name="Sato C."/>
            <person name="Yasukawa Z."/>
            <person name="Honda N."/>
            <person name="Matsuda T."/>
            <person name="Kitajima K."/>
        </authorList>
    </citation>
    <scope>NUCLEOTIDE SEQUENCE [MRNA]</scope>
    <scope>PROTEIN SEQUENCE OF 18-26; 194-197; 203-208 AND 221-228</scope>
    <scope>GLYCOSYLATION</scope>
    <scope>STRUCTURE OF CARBOHYDRATES</scope>
    <source>
        <tissue>Adipose tissue</tissue>
    </source>
</reference>
<reference key="2">
    <citation type="submission" date="2005-08" db="EMBL/GenBank/DDBJ databases">
        <authorList>
            <person name="Morsci N.S."/>
            <person name="Schnabel R.D."/>
            <person name="Taylor J.F."/>
        </authorList>
    </citation>
    <scope>NUCLEOTIDE SEQUENCE [GENOMIC DNA]</scope>
</reference>
<reference key="3">
    <citation type="submission" date="2007-04" db="EMBL/GenBank/DDBJ databases">
        <authorList>
            <consortium name="NIH - Mammalian Gene Collection (MGC) project"/>
        </authorList>
    </citation>
    <scope>NUCLEOTIDE SEQUENCE [LARGE SCALE MRNA]</scope>
    <source>
        <strain>Hereford</strain>
        <tissue>Ascending colon</tissue>
    </source>
</reference>
<reference key="4">
    <citation type="journal article" date="2004" name="Proteomics">
        <title>Proteomic and functional characterization of endogenous adiponectin purified from fetal bovine serum.</title>
        <authorList>
            <person name="Wang Y."/>
            <person name="Lu G."/>
            <person name="Wong W.P.S."/>
            <person name="Vliegenthart J.F.G."/>
            <person name="Gerwig G.J."/>
            <person name="Lam K.S.L."/>
            <person name="Cooper G.J.S."/>
            <person name="Xu A."/>
        </authorList>
    </citation>
    <scope>PROTEIN SEQUENCE OF 18-26</scope>
    <scope>PARTIAL PROTEIN SEQUENCE</scope>
    <scope>SUBCELLULAR LOCATION</scope>
    <scope>HYDROXYLATION AT LYS-28; PRO-39; PRO-42; PRO-48; LYS-60; LYS-63; LYS-72; PRO-86 AND LYS-96</scope>
    <scope>GLYCOSYLATION AT LYS-28; LYS-60; LYS-63 AND LYS-96</scope>
    <scope>LACK OF HYDROXYLATION AT PRO-57; PRO-66; PRO-71; PRO-90 AND PRO-99</scope>
    <scope>LACK OF GLYCOSYLATION AT ASN-225</scope>
    <scope>IDENTIFICATION BY MASS SPECTROMETRY</scope>
</reference>
<accession>Q3Y5Z3</accession>
<accession>A5D7A8</accession>
<accession>Q95MQ4</accession>
<name>ADIPO_BOVIN</name>
<protein>
    <recommendedName>
        <fullName>Adiponectin</fullName>
    </recommendedName>
    <alternativeName>
        <fullName>30 kDa adipocyte complement-related protein</fullName>
    </alternativeName>
    <alternativeName>
        <fullName>Adipocyte complement-related 30 kDa protein</fullName>
        <shortName>ACRP30</shortName>
    </alternativeName>
    <alternativeName>
        <fullName>Adipocyte, C1q and collagen domain-containing protein</fullName>
    </alternativeName>
    <alternativeName>
        <fullName>Adipose most abundant gene transcript 1 protein</fullName>
        <shortName>apM-1</shortName>
    </alternativeName>
</protein>